<protein>
    <recommendedName>
        <fullName evidence="1">Vitamin B12 import system permease protein BtuC</fullName>
    </recommendedName>
</protein>
<accession>B5F7F5</accession>
<reference key="1">
    <citation type="journal article" date="2011" name="J. Bacteriol.">
        <title>Comparative genomics of 28 Salmonella enterica isolates: evidence for CRISPR-mediated adaptive sublineage evolution.</title>
        <authorList>
            <person name="Fricke W.F."/>
            <person name="Mammel M.K."/>
            <person name="McDermott P.F."/>
            <person name="Tartera C."/>
            <person name="White D.G."/>
            <person name="Leclerc J.E."/>
            <person name="Ravel J."/>
            <person name="Cebula T.A."/>
        </authorList>
    </citation>
    <scope>NUCLEOTIDE SEQUENCE [LARGE SCALE GENOMIC DNA]</scope>
    <source>
        <strain>SL483</strain>
    </source>
</reference>
<comment type="function">
    <text evidence="1">Part of the ABC transporter complex BtuCDF involved in vitamin B12 import. Involved in the translocation of the substrate across the membrane.</text>
</comment>
<comment type="subunit">
    <text evidence="1">The complex is composed of two ATP-binding proteins (BtuD), two transmembrane proteins (BtuC) and a solute-binding protein (BtuF).</text>
</comment>
<comment type="subcellular location">
    <subcellularLocation>
        <location evidence="1">Cell inner membrane</location>
        <topology evidence="1">Multi-pass membrane protein</topology>
    </subcellularLocation>
</comment>
<comment type="similarity">
    <text evidence="1">Belongs to the binding-protein-dependent transport system permease family. FecCD subfamily.</text>
</comment>
<organism>
    <name type="scientific">Salmonella agona (strain SL483)</name>
    <dbReference type="NCBI Taxonomy" id="454166"/>
    <lineage>
        <taxon>Bacteria</taxon>
        <taxon>Pseudomonadati</taxon>
        <taxon>Pseudomonadota</taxon>
        <taxon>Gammaproteobacteria</taxon>
        <taxon>Enterobacterales</taxon>
        <taxon>Enterobacteriaceae</taxon>
        <taxon>Salmonella</taxon>
    </lineage>
</organism>
<evidence type="ECO:0000255" key="1">
    <source>
        <dbReference type="HAMAP-Rule" id="MF_01004"/>
    </source>
</evidence>
<proteinExistence type="inferred from homology"/>
<name>BTUC_SALA4</name>
<feature type="chain" id="PRO_1000201551" description="Vitamin B12 import system permease protein BtuC">
    <location>
        <begin position="1"/>
        <end position="326"/>
    </location>
</feature>
<feature type="transmembrane region" description="Helical" evidence="1">
    <location>
        <begin position="15"/>
        <end position="35"/>
    </location>
</feature>
<feature type="transmembrane region" description="Helical" evidence="1">
    <location>
        <begin position="61"/>
        <end position="81"/>
    </location>
</feature>
<feature type="transmembrane region" description="Helical" evidence="1">
    <location>
        <begin position="88"/>
        <end position="108"/>
    </location>
</feature>
<feature type="transmembrane region" description="Helical" evidence="1">
    <location>
        <begin position="112"/>
        <end position="132"/>
    </location>
</feature>
<feature type="transmembrane region" description="Helical" evidence="1">
    <location>
        <begin position="146"/>
        <end position="166"/>
    </location>
</feature>
<feature type="transmembrane region" description="Helical" evidence="1">
    <location>
        <begin position="184"/>
        <end position="204"/>
    </location>
</feature>
<feature type="transmembrane region" description="Helical" evidence="1">
    <location>
        <begin position="240"/>
        <end position="260"/>
    </location>
</feature>
<feature type="transmembrane region" description="Helical" evidence="1">
    <location>
        <begin position="274"/>
        <end position="294"/>
    </location>
</feature>
<feature type="transmembrane region" description="Helical" evidence="1">
    <location>
        <begin position="302"/>
        <end position="322"/>
    </location>
</feature>
<dbReference type="EMBL" id="CP001138">
    <property type="protein sequence ID" value="ACH52593.1"/>
    <property type="molecule type" value="Genomic_DNA"/>
</dbReference>
<dbReference type="RefSeq" id="WP_000954984.1">
    <property type="nucleotide sequence ID" value="NC_011149.1"/>
</dbReference>
<dbReference type="SMR" id="B5F7F5"/>
<dbReference type="KEGG" id="sea:SeAg_B1833"/>
<dbReference type="HOGENOM" id="CLU_013016_0_3_6"/>
<dbReference type="Proteomes" id="UP000008819">
    <property type="component" value="Chromosome"/>
</dbReference>
<dbReference type="GO" id="GO:0005886">
    <property type="term" value="C:plasma membrane"/>
    <property type="evidence" value="ECO:0007669"/>
    <property type="project" value="UniProtKB-SubCell"/>
</dbReference>
<dbReference type="GO" id="GO:0090482">
    <property type="term" value="F:vitamin transmembrane transporter activity"/>
    <property type="evidence" value="ECO:0007669"/>
    <property type="project" value="UniProtKB-UniRule"/>
</dbReference>
<dbReference type="GO" id="GO:0015889">
    <property type="term" value="P:cobalamin transport"/>
    <property type="evidence" value="ECO:0007669"/>
    <property type="project" value="UniProtKB-UniRule"/>
</dbReference>
<dbReference type="CDD" id="cd06550">
    <property type="entry name" value="TM_ABC_iron-siderophores_like"/>
    <property type="match status" value="1"/>
</dbReference>
<dbReference type="FunFam" id="1.10.3470.10:FF:000001">
    <property type="entry name" value="Vitamin B12 ABC transporter permease BtuC"/>
    <property type="match status" value="1"/>
</dbReference>
<dbReference type="Gene3D" id="1.10.3470.10">
    <property type="entry name" value="ABC transporter involved in vitamin B12 uptake, BtuC"/>
    <property type="match status" value="1"/>
</dbReference>
<dbReference type="HAMAP" id="MF_01004">
    <property type="entry name" value="BtuC"/>
    <property type="match status" value="1"/>
</dbReference>
<dbReference type="InterPro" id="IPR037294">
    <property type="entry name" value="ABC_BtuC-like"/>
</dbReference>
<dbReference type="InterPro" id="IPR023691">
    <property type="entry name" value="ABC_transptr_BtuC"/>
</dbReference>
<dbReference type="InterPro" id="IPR000522">
    <property type="entry name" value="ABC_transptr_permease_BtuC"/>
</dbReference>
<dbReference type="NCBIfam" id="NF003001">
    <property type="entry name" value="PRK03784.1"/>
    <property type="match status" value="1"/>
</dbReference>
<dbReference type="PANTHER" id="PTHR30472">
    <property type="entry name" value="FERRIC ENTEROBACTIN TRANSPORT SYSTEM PERMEASE PROTEIN"/>
    <property type="match status" value="1"/>
</dbReference>
<dbReference type="PANTHER" id="PTHR30472:SF29">
    <property type="entry name" value="VITAMIN B12 IMPORT SYSTEM PERMEASE PROTEIN BTUC"/>
    <property type="match status" value="1"/>
</dbReference>
<dbReference type="Pfam" id="PF01032">
    <property type="entry name" value="FecCD"/>
    <property type="match status" value="1"/>
</dbReference>
<dbReference type="SUPFAM" id="SSF81345">
    <property type="entry name" value="ABC transporter involved in vitamin B12 uptake, BtuC"/>
    <property type="match status" value="1"/>
</dbReference>
<keyword id="KW-0997">Cell inner membrane</keyword>
<keyword id="KW-1003">Cell membrane</keyword>
<keyword id="KW-0472">Membrane</keyword>
<keyword id="KW-0812">Transmembrane</keyword>
<keyword id="KW-1133">Transmembrane helix</keyword>
<keyword id="KW-0813">Transport</keyword>
<gene>
    <name evidence="1" type="primary">btuC</name>
    <name type="ordered locus">SeAg_B1833</name>
</gene>
<sequence>MLTFARQQQRRNVRWLLSLSLLVLLATLLSLCAGEQWIAPGDWLSARGELFVWQIRLPRTLAVLLVGAALALSGAVMQALFENPLAEPGLLGVSNGAGVGLIAAVLLGQGQLPGWALGLCAIAGALIITLILLRFARRHLSTSRLLLAGVALGIICSALMTWAIYFSTSFDLRQLMYWMMGGFGGVDWQQSWLMIALIPVLIWICCQSQPLNMLALGETSARQLGLPLWFWRNLLVVATGWMVGVSVAMAGAIGFIGLVIPHILRLCGLTDHRVLLPGCALAGAIALLLADVVARLALASAELPIGVVTATLGAPVFIWLLLKSAR</sequence>